<name>TES26_TOXCA</name>
<accession>P54190</accession>
<reference key="1">
    <citation type="journal article" date="1995" name="J. Biol. Chem.">
        <title>An abundant, trans-spliced mRNA from Toxocara canis infective larvae encodes a 26-kDa protein with homology to phosphatidylethanolamine-binding proteins.</title>
        <authorList>
            <person name="Gems D."/>
            <person name="Ferguson C.J."/>
            <person name="Robertson B.D."/>
            <person name="Nieves R."/>
            <person name="Page A.P."/>
            <person name="Blaxter M.L."/>
            <person name="Maizels R.M."/>
        </authorList>
    </citation>
    <scope>NUCLEOTIDE SEQUENCE [MRNA]</scope>
</reference>
<dbReference type="EMBL" id="U29761">
    <property type="protein sequence ID" value="AAC46843.1"/>
    <property type="molecule type" value="mRNA"/>
</dbReference>
<dbReference type="PIR" id="A57391">
    <property type="entry name" value="A57391"/>
</dbReference>
<dbReference type="SMR" id="P54190"/>
<dbReference type="Proteomes" id="UP000050794">
    <property type="component" value="Unassembled WGS sequence"/>
</dbReference>
<dbReference type="GO" id="GO:0005576">
    <property type="term" value="C:extracellular region"/>
    <property type="evidence" value="ECO:0007669"/>
    <property type="project" value="UniProtKB-SubCell"/>
</dbReference>
<dbReference type="GO" id="GO:0008289">
    <property type="term" value="F:lipid binding"/>
    <property type="evidence" value="ECO:0007669"/>
    <property type="project" value="UniProtKB-KW"/>
</dbReference>
<dbReference type="CDD" id="cd00866">
    <property type="entry name" value="PEBP_euk"/>
    <property type="match status" value="1"/>
</dbReference>
<dbReference type="Gene3D" id="3.90.280.10">
    <property type="entry name" value="PEBP-like"/>
    <property type="match status" value="1"/>
</dbReference>
<dbReference type="Gene3D" id="1.10.10.1870">
    <property type="entry name" value="ShTK domain-like"/>
    <property type="match status" value="1"/>
</dbReference>
<dbReference type="InterPro" id="IPR008914">
    <property type="entry name" value="PEBP"/>
</dbReference>
<dbReference type="InterPro" id="IPR036610">
    <property type="entry name" value="PEBP-like_sf"/>
</dbReference>
<dbReference type="InterPro" id="IPR035810">
    <property type="entry name" value="PEBP_euk"/>
</dbReference>
<dbReference type="InterPro" id="IPR001858">
    <property type="entry name" value="Phosphatidylethanolamine-bd_CS"/>
</dbReference>
<dbReference type="InterPro" id="IPR003582">
    <property type="entry name" value="ShKT_dom"/>
</dbReference>
<dbReference type="PANTHER" id="PTHR11362">
    <property type="entry name" value="PHOSPHATIDYLETHANOLAMINE-BINDING PROTEIN"/>
    <property type="match status" value="1"/>
</dbReference>
<dbReference type="PANTHER" id="PTHR11362:SF82">
    <property type="entry name" value="PHOSPHATIDYLETHANOLAMINE-BINDING PROTEIN 4"/>
    <property type="match status" value="1"/>
</dbReference>
<dbReference type="Pfam" id="PF01161">
    <property type="entry name" value="PBP"/>
    <property type="match status" value="1"/>
</dbReference>
<dbReference type="Pfam" id="PF01549">
    <property type="entry name" value="ShK"/>
    <property type="match status" value="2"/>
</dbReference>
<dbReference type="SMART" id="SM00254">
    <property type="entry name" value="ShKT"/>
    <property type="match status" value="2"/>
</dbReference>
<dbReference type="SUPFAM" id="SSF49777">
    <property type="entry name" value="PEBP-like"/>
    <property type="match status" value="1"/>
</dbReference>
<dbReference type="PROSITE" id="PS01220">
    <property type="entry name" value="PBP"/>
    <property type="match status" value="1"/>
</dbReference>
<dbReference type="PROSITE" id="PS51670">
    <property type="entry name" value="SHKT"/>
    <property type="match status" value="2"/>
</dbReference>
<keyword id="KW-1015">Disulfide bond</keyword>
<keyword id="KW-0446">Lipid-binding</keyword>
<keyword id="KW-0677">Repeat</keyword>
<keyword id="KW-0964">Secreted</keyword>
<keyword id="KW-0732">Signal</keyword>
<gene>
    <name type="primary">TES-26</name>
</gene>
<comment type="function">
    <text>Binds phosphatidylethanolamine.</text>
</comment>
<comment type="subcellular location">
    <subcellularLocation>
        <location>Secreted</location>
    </subcellularLocation>
</comment>
<comment type="developmental stage">
    <text>Found in larva, but not in the adult parasite.</text>
</comment>
<comment type="similarity">
    <text evidence="3">Belongs to the phosphatidylethanolamine-binding protein family.</text>
</comment>
<feature type="signal peptide" evidence="1">
    <location>
        <begin position="1"/>
        <end position="21"/>
    </location>
</feature>
<feature type="chain" id="PRO_0000023283" description="26 kDa secreted antigen">
    <location>
        <begin position="22"/>
        <end position="262"/>
    </location>
</feature>
<feature type="domain" description="ShKT 1" evidence="2">
    <location>
        <begin position="23"/>
        <end position="57"/>
    </location>
</feature>
<feature type="domain" description="ShKT 2" evidence="2">
    <location>
        <begin position="59"/>
        <end position="93"/>
    </location>
</feature>
<feature type="disulfide bond" evidence="2">
    <location>
        <begin position="23"/>
        <end position="57"/>
    </location>
</feature>
<feature type="disulfide bond" evidence="2">
    <location>
        <begin position="30"/>
        <end position="50"/>
    </location>
</feature>
<feature type="disulfide bond" evidence="2">
    <location>
        <begin position="37"/>
        <end position="54"/>
    </location>
</feature>
<feature type="disulfide bond" evidence="2">
    <location>
        <begin position="59"/>
        <end position="93"/>
    </location>
</feature>
<feature type="disulfide bond" evidence="2">
    <location>
        <begin position="66"/>
        <end position="86"/>
    </location>
</feature>
<feature type="disulfide bond" evidence="2">
    <location>
        <begin position="73"/>
        <end position="90"/>
    </location>
</feature>
<proteinExistence type="evidence at transcript level"/>
<sequence>MSVVHKACLIALLFVSSGVAQQCMDSASDCAANAGSCFTRPVSQVLQNRCQRTCNTCDCRDEANNCAASINLCQNPTFEPLVRDRCQKTCGLCAGCGFISSGIVPLVVTSAPSRRVSVTFANNVQVNCGNTLTTAQVANQPTVTWEAQPNDRYTLIMVDPDFPSAANGQQGQRLHWWVINIPGNNIAGGTTLAAFQPSTPAANTGVHRYVFLVYRQPAAINSPLLNNLVVQDSERPGFGTTAFATQFNLGSPYAGNFYRSQA</sequence>
<protein>
    <recommendedName>
        <fullName>26 kDa secreted antigen</fullName>
    </recommendedName>
    <alternativeName>
        <fullName>Toxocara excretory-secretory antigen 26</fullName>
        <shortName>TES-26</shortName>
    </alternativeName>
</protein>
<evidence type="ECO:0000255" key="1"/>
<evidence type="ECO:0000255" key="2">
    <source>
        <dbReference type="PROSITE-ProRule" id="PRU01005"/>
    </source>
</evidence>
<evidence type="ECO:0000305" key="3"/>
<organism>
    <name type="scientific">Toxocara canis</name>
    <name type="common">Canine roundworm</name>
    <dbReference type="NCBI Taxonomy" id="6265"/>
    <lineage>
        <taxon>Eukaryota</taxon>
        <taxon>Metazoa</taxon>
        <taxon>Ecdysozoa</taxon>
        <taxon>Nematoda</taxon>
        <taxon>Chromadorea</taxon>
        <taxon>Rhabditida</taxon>
        <taxon>Spirurina</taxon>
        <taxon>Ascaridomorpha</taxon>
        <taxon>Ascaridoidea</taxon>
        <taxon>Toxocaridae</taxon>
        <taxon>Toxocara</taxon>
    </lineage>
</organism>